<reference key="1">
    <citation type="journal article" date="1997" name="Cell">
        <title>Activation of the ethylene gas response pathway in Arabidopsis by the nuclear protein ETHYLENE-INSENSITIVE3 and related proteins.</title>
        <authorList>
            <person name="Chao Q."/>
            <person name="Rothenberg M."/>
            <person name="Solano R."/>
            <person name="Roman G."/>
            <person name="Terzaghi W."/>
            <person name="Ecker J.R."/>
        </authorList>
    </citation>
    <scope>NUCLEOTIDE SEQUENCE [GENOMIC DNA / MRNA]</scope>
    <scope>FUNCTION</scope>
    <scope>MUTANTS EIN3-1; EIN3-2 AND EIN3-3</scope>
    <scope>MUTAGENESIS OF LYS-245</scope>
    <source>
        <strain>cv. Columbia</strain>
    </source>
</reference>
<reference key="2">
    <citation type="journal article" date="2000" name="DNA Res.">
        <title>Structural analysis of Arabidopsis thaliana chromosome 3. I. Sequence features of the regions of 4,504,864 bp covered by sixty P1 and TAC clones.</title>
        <authorList>
            <person name="Sato S."/>
            <person name="Nakamura Y."/>
            <person name="Kaneko T."/>
            <person name="Katoh T."/>
            <person name="Asamizu E."/>
            <person name="Tabata S."/>
        </authorList>
    </citation>
    <scope>NUCLEOTIDE SEQUENCE [LARGE SCALE GENOMIC DNA]</scope>
    <source>
        <strain>cv. Columbia</strain>
    </source>
</reference>
<reference key="3">
    <citation type="journal article" date="2017" name="Plant J.">
        <title>Araport11: a complete reannotation of the Arabidopsis thaliana reference genome.</title>
        <authorList>
            <person name="Cheng C.Y."/>
            <person name="Krishnakumar V."/>
            <person name="Chan A.P."/>
            <person name="Thibaud-Nissen F."/>
            <person name="Schobel S."/>
            <person name="Town C.D."/>
        </authorList>
    </citation>
    <scope>GENOME REANNOTATION</scope>
    <source>
        <strain>cv. Columbia</strain>
    </source>
</reference>
<reference key="4">
    <citation type="journal article" date="2003" name="Science">
        <title>Empirical analysis of transcriptional activity in the Arabidopsis genome.</title>
        <authorList>
            <person name="Yamada K."/>
            <person name="Lim J."/>
            <person name="Dale J.M."/>
            <person name="Chen H."/>
            <person name="Shinn P."/>
            <person name="Palm C.J."/>
            <person name="Southwick A.M."/>
            <person name="Wu H.C."/>
            <person name="Kim C.J."/>
            <person name="Nguyen M."/>
            <person name="Pham P.K."/>
            <person name="Cheuk R.F."/>
            <person name="Karlin-Newmann G."/>
            <person name="Liu S.X."/>
            <person name="Lam B."/>
            <person name="Sakano H."/>
            <person name="Wu T."/>
            <person name="Yu G."/>
            <person name="Miranda M."/>
            <person name="Quach H.L."/>
            <person name="Tripp M."/>
            <person name="Chang C.H."/>
            <person name="Lee J.M."/>
            <person name="Toriumi M.J."/>
            <person name="Chan M.M."/>
            <person name="Tang C.C."/>
            <person name="Onodera C.S."/>
            <person name="Deng J.M."/>
            <person name="Akiyama K."/>
            <person name="Ansari Y."/>
            <person name="Arakawa T."/>
            <person name="Banh J."/>
            <person name="Banno F."/>
            <person name="Bowser L."/>
            <person name="Brooks S.Y."/>
            <person name="Carninci P."/>
            <person name="Chao Q."/>
            <person name="Choy N."/>
            <person name="Enju A."/>
            <person name="Goldsmith A.D."/>
            <person name="Gurjal M."/>
            <person name="Hansen N.F."/>
            <person name="Hayashizaki Y."/>
            <person name="Johnson-Hopson C."/>
            <person name="Hsuan V.W."/>
            <person name="Iida K."/>
            <person name="Karnes M."/>
            <person name="Khan S."/>
            <person name="Koesema E."/>
            <person name="Ishida J."/>
            <person name="Jiang P.X."/>
            <person name="Jones T."/>
            <person name="Kawai J."/>
            <person name="Kamiya A."/>
            <person name="Meyers C."/>
            <person name="Nakajima M."/>
            <person name="Narusaka M."/>
            <person name="Seki M."/>
            <person name="Sakurai T."/>
            <person name="Satou M."/>
            <person name="Tamse R."/>
            <person name="Vaysberg M."/>
            <person name="Wallender E.K."/>
            <person name="Wong C."/>
            <person name="Yamamura Y."/>
            <person name="Yuan S."/>
            <person name="Shinozaki K."/>
            <person name="Davis R.W."/>
            <person name="Theologis A."/>
            <person name="Ecker J.R."/>
        </authorList>
    </citation>
    <scope>NUCLEOTIDE SEQUENCE [LARGE SCALE MRNA]</scope>
    <source>
        <strain>cv. Columbia</strain>
    </source>
</reference>
<reference key="5">
    <citation type="journal article" date="1998" name="Genes Dev.">
        <title>Nuclear events in ethylene signaling: a transcriptional cascade mediated by ETHYLENE-INSENSITIVE3 and ETHYLENE-RESPONSE-FACTOR1.</title>
        <authorList>
            <person name="Solano R."/>
            <person name="Stepanova A.N."/>
            <person name="Chao Q."/>
            <person name="Ecker J.R."/>
        </authorList>
    </citation>
    <scope>CHARACTERIZATION</scope>
    <scope>FUNCTION</scope>
</reference>
<reference key="6">
    <citation type="journal article" date="2007" name="J. Exp. Bot.">
        <title>Arabidopsis enhanced ethylene response 4 encodes an EIN3-interacting TFIID transcription factor required for proper ethylene response, including ERF1 induction.</title>
        <authorList>
            <person name="Robles L.M."/>
            <person name="Wampole J.S."/>
            <person name="Christians M.J."/>
            <person name="Larsen P.B."/>
        </authorList>
    </citation>
    <scope>INTERACTION WITH TAF12B</scope>
    <source>
        <strain>cv. Wassilewskija</strain>
    </source>
</reference>
<reference key="7">
    <citation type="journal article" date="2008" name="Nature">
        <title>Dual control of nuclear EIN3 by bifurcate MAPK cascades in C2H4 signalling.</title>
        <authorList>
            <person name="Yoo S.D."/>
            <person name="Cho Y.H."/>
            <person name="Tena G."/>
            <person name="Xiong Y."/>
            <person name="Sheen J."/>
        </authorList>
    </citation>
    <scope>ACTIVITY REGULATION</scope>
</reference>
<reference key="8">
    <citation type="journal article" date="2015" name="PLoS Genet.">
        <title>Unsaturation of very-long-chain ceramides protects plant from hypoxia-induced damages by modulating ethylene signaling in Arabidopsis.</title>
        <authorList>
            <person name="Xie L.-J."/>
            <person name="Chen Q.-F."/>
            <person name="Chen M.-X."/>
            <person name="Yu L.-J."/>
            <person name="Huang L."/>
            <person name="Chen L."/>
            <person name="Wang F.-Z."/>
            <person name="Xia F.-N."/>
            <person name="Zhu T.-R."/>
            <person name="Wu J.-X."/>
            <person name="Yin J."/>
            <person name="Liao B."/>
            <person name="Shi J."/>
            <person name="Zhang J.-H."/>
            <person name="Aharoni A."/>
            <person name="Yao N."/>
            <person name="Shu W."/>
            <person name="Xiao S."/>
        </authorList>
    </citation>
    <scope>ACTIVITY REGULATION</scope>
    <scope>INDUCTION BY HYPOXIA</scope>
    <source>
        <strain>cv. Columbia</strain>
    </source>
</reference>
<reference key="9">
    <citation type="journal article" date="2016" name="Nat. Commun.">
        <title>EIN2-dependent regulation of acetylation of histone H3K14 and non-canonical histone H3K23 in ethylene signalling.</title>
        <authorList>
            <person name="Zhang F."/>
            <person name="Qi B."/>
            <person name="Wang L."/>
            <person name="Zhao B."/>
            <person name="Rode S."/>
            <person name="Riggan N.D."/>
            <person name="Ecker J.R."/>
            <person name="Qiao H."/>
        </authorList>
    </citation>
    <scope>INTERACTION WITH ENAP1</scope>
    <source>
        <strain>cv. Columbia</strain>
    </source>
</reference>
<reference key="10">
    <citation type="journal article" date="2017" name="Proc. Natl. Acad. Sci. U.S.A.">
        <title>EIN2 mediates direct regulation of histone acetylation in the ethylene response.</title>
        <authorList>
            <person name="Zhang F."/>
            <person name="Wang L."/>
            <person name="Qi B."/>
            <person name="Zhao B."/>
            <person name="Ko E.E."/>
            <person name="Riggan N.D."/>
            <person name="Chin K."/>
            <person name="Qiao H."/>
        </authorList>
    </citation>
    <scope>FUNCTION</scope>
    <scope>INTERACTION WITH ENAP1</scope>
    <source>
        <strain>cv. Columbia</strain>
    </source>
</reference>
<reference key="11">
    <citation type="journal article" date="2017" name="Sci. Rep.">
        <title>Regulatory functions of cellular energy sensor SNF1-related kinase1 for leaf senescence delay through ETHYLENE- INSENSITIVE3 repression.</title>
        <authorList>
            <person name="Kim G.D."/>
            <person name="Cho Y.H."/>
            <person name="Yoo S.D."/>
        </authorList>
    </citation>
    <scope>INTERACTION WITH KIN10</scope>
    <scope>PHOSPHORYLATION</scope>
    <scope>ACTIVITY REGULATION</scope>
</reference>
<reference key="12">
    <citation type="journal article" date="2015" name="PLoS ONE">
        <title>Biochemical and Structural Insights into the Mechanism of DNA Recognition by Arabidopsis ETHYLENE INSENSITIVE3.</title>
        <authorList>
            <person name="Song J."/>
            <person name="Zhu C."/>
            <person name="Zhang X."/>
            <person name="Wen X."/>
            <person name="Liu L."/>
            <person name="Peng J."/>
            <person name="Guo H."/>
            <person name="Yi C."/>
        </authorList>
    </citation>
    <scope>X-RAY CRYSTALLOGRAPHY (1.78 ANGSTROMS) OF 174-306</scope>
    <scope>FUNCTION</scope>
    <scope>DNA-BINDING DOMAIN</scope>
</reference>
<organism>
    <name type="scientific">Arabidopsis thaliana</name>
    <name type="common">Mouse-ear cress</name>
    <dbReference type="NCBI Taxonomy" id="3702"/>
    <lineage>
        <taxon>Eukaryota</taxon>
        <taxon>Viridiplantae</taxon>
        <taxon>Streptophyta</taxon>
        <taxon>Embryophyta</taxon>
        <taxon>Tracheophyta</taxon>
        <taxon>Spermatophyta</taxon>
        <taxon>Magnoliopsida</taxon>
        <taxon>eudicotyledons</taxon>
        <taxon>Gunneridae</taxon>
        <taxon>Pentapetalae</taxon>
        <taxon>rosids</taxon>
        <taxon>malvids</taxon>
        <taxon>Brassicales</taxon>
        <taxon>Brassicaceae</taxon>
        <taxon>Camelineae</taxon>
        <taxon>Arabidopsis</taxon>
    </lineage>
</organism>
<name>EIN3_ARATH</name>
<accession>O24606</accession>
<accession>Q8VYW4</accession>
<protein>
    <recommendedName>
        <fullName evidence="12">Protein ETHYLENE INSENSITIVE 3</fullName>
    </recommendedName>
</protein>
<gene>
    <name evidence="12" type="primary">EIN3</name>
    <name evidence="14" type="ordered locus">At3g20770</name>
    <name evidence="15" type="ORF">MOE17.8</name>
</gene>
<dbReference type="EMBL" id="AF004216">
    <property type="protein sequence ID" value="AAC49749.1"/>
    <property type="molecule type" value="mRNA"/>
</dbReference>
<dbReference type="EMBL" id="AF004217">
    <property type="protein sequence ID" value="AAC49750.1"/>
    <property type="molecule type" value="Genomic_DNA"/>
</dbReference>
<dbReference type="EMBL" id="AB025629">
    <property type="protein sequence ID" value="BAB02485.1"/>
    <property type="molecule type" value="Genomic_DNA"/>
</dbReference>
<dbReference type="EMBL" id="CP002686">
    <property type="protein sequence ID" value="AEE76421.1"/>
    <property type="molecule type" value="Genomic_DNA"/>
</dbReference>
<dbReference type="EMBL" id="AY069875">
    <property type="protein sequence ID" value="AAL47431.2"/>
    <property type="molecule type" value="mRNA"/>
</dbReference>
<dbReference type="RefSeq" id="NP_188713.1">
    <property type="nucleotide sequence ID" value="NM_112968.4"/>
</dbReference>
<dbReference type="PDB" id="4ZDS">
    <property type="method" value="X-ray"/>
    <property type="resolution" value="1.78 A"/>
    <property type="chains" value="A/B=174-306"/>
</dbReference>
<dbReference type="PDBsum" id="4ZDS"/>
<dbReference type="SMR" id="O24606"/>
<dbReference type="BioGRID" id="6957">
    <property type="interactions" value="9"/>
</dbReference>
<dbReference type="DIP" id="DIP-34865N"/>
<dbReference type="FunCoup" id="O24606">
    <property type="interactions" value="2518"/>
</dbReference>
<dbReference type="IntAct" id="O24606">
    <property type="interactions" value="7"/>
</dbReference>
<dbReference type="STRING" id="3702.O24606"/>
<dbReference type="GlyGen" id="O24606">
    <property type="glycosylation" value="1 site"/>
</dbReference>
<dbReference type="iPTMnet" id="O24606"/>
<dbReference type="PaxDb" id="3702-AT3G20770.1"/>
<dbReference type="ProteomicsDB" id="220446"/>
<dbReference type="EnsemblPlants" id="AT3G20770.1">
    <property type="protein sequence ID" value="AT3G20770.1"/>
    <property type="gene ID" value="AT3G20770"/>
</dbReference>
<dbReference type="GeneID" id="821625"/>
<dbReference type="Gramene" id="AT3G20770.1">
    <property type="protein sequence ID" value="AT3G20770.1"/>
    <property type="gene ID" value="AT3G20770"/>
</dbReference>
<dbReference type="KEGG" id="ath:AT3G20770"/>
<dbReference type="Araport" id="AT3G20770"/>
<dbReference type="TAIR" id="AT3G20770">
    <property type="gene designation" value="EIN3"/>
</dbReference>
<dbReference type="eggNOG" id="ENOG502QQSG">
    <property type="taxonomic scope" value="Eukaryota"/>
</dbReference>
<dbReference type="HOGENOM" id="CLU_027306_0_0_1"/>
<dbReference type="InParanoid" id="O24606"/>
<dbReference type="OMA" id="NGKEDWW"/>
<dbReference type="PhylomeDB" id="O24606"/>
<dbReference type="EvolutionaryTrace" id="O24606"/>
<dbReference type="PRO" id="PR:O24606"/>
<dbReference type="Proteomes" id="UP000006548">
    <property type="component" value="Chromosome 3"/>
</dbReference>
<dbReference type="ExpressionAtlas" id="O24606">
    <property type="expression patterns" value="baseline and differential"/>
</dbReference>
<dbReference type="GO" id="GO:0005634">
    <property type="term" value="C:nucleus"/>
    <property type="evidence" value="ECO:0000314"/>
    <property type="project" value="TAIR"/>
</dbReference>
<dbReference type="GO" id="GO:0003682">
    <property type="term" value="F:chromatin binding"/>
    <property type="evidence" value="ECO:0000314"/>
    <property type="project" value="UniProtKB"/>
</dbReference>
<dbReference type="GO" id="GO:0003677">
    <property type="term" value="F:DNA binding"/>
    <property type="evidence" value="ECO:0000314"/>
    <property type="project" value="UniProtKB"/>
</dbReference>
<dbReference type="GO" id="GO:0003700">
    <property type="term" value="F:DNA-binding transcription factor activity"/>
    <property type="evidence" value="ECO:0000314"/>
    <property type="project" value="TAIR"/>
</dbReference>
<dbReference type="GO" id="GO:0042393">
    <property type="term" value="F:histone binding"/>
    <property type="evidence" value="ECO:0000314"/>
    <property type="project" value="UniProtKB"/>
</dbReference>
<dbReference type="GO" id="GO:0019900">
    <property type="term" value="F:kinase binding"/>
    <property type="evidence" value="ECO:0000353"/>
    <property type="project" value="UniProtKB"/>
</dbReference>
<dbReference type="GO" id="GO:0000976">
    <property type="term" value="F:transcription cis-regulatory region binding"/>
    <property type="evidence" value="ECO:0000314"/>
    <property type="project" value="TAIR"/>
</dbReference>
<dbReference type="GO" id="GO:0042742">
    <property type="term" value="P:defense response to bacterium"/>
    <property type="evidence" value="ECO:0000316"/>
    <property type="project" value="TAIR"/>
</dbReference>
<dbReference type="GO" id="GO:0040029">
    <property type="term" value="P:epigenetic regulation of gene expression"/>
    <property type="evidence" value="ECO:0000315"/>
    <property type="project" value="UniProtKB"/>
</dbReference>
<dbReference type="GO" id="GO:0009873">
    <property type="term" value="P:ethylene-activated signaling pathway"/>
    <property type="evidence" value="ECO:0000315"/>
    <property type="project" value="UniProtKB"/>
</dbReference>
<dbReference type="GO" id="GO:0006355">
    <property type="term" value="P:regulation of DNA-templated transcription"/>
    <property type="evidence" value="ECO:0000304"/>
    <property type="project" value="TAIR"/>
</dbReference>
<dbReference type="GO" id="GO:2000082">
    <property type="term" value="P:regulation of L-ascorbic acid biosynthetic process"/>
    <property type="evidence" value="ECO:0000270"/>
    <property type="project" value="TAIR"/>
</dbReference>
<dbReference type="GO" id="GO:0009723">
    <property type="term" value="P:response to ethylene"/>
    <property type="evidence" value="ECO:0000315"/>
    <property type="project" value="TAIR"/>
</dbReference>
<dbReference type="GO" id="GO:0001666">
    <property type="term" value="P:response to hypoxia"/>
    <property type="evidence" value="ECO:0000315"/>
    <property type="project" value="TAIR"/>
</dbReference>
<dbReference type="GO" id="GO:0010182">
    <property type="term" value="P:sugar mediated signaling pathway"/>
    <property type="evidence" value="ECO:0000304"/>
    <property type="project" value="TAIR"/>
</dbReference>
<dbReference type="FunFam" id="1.10.3180.10:FF:000001">
    <property type="entry name" value="Ethylene insensitive 3-like 1"/>
    <property type="match status" value="1"/>
</dbReference>
<dbReference type="FunFam" id="1.10.3180.10:FF:000002">
    <property type="entry name" value="Ethylene insensitive 3-like 1"/>
    <property type="match status" value="1"/>
</dbReference>
<dbReference type="Gene3D" id="1.10.3180.10">
    <property type="entry name" value="DNA-binding domain of EIN3-like"/>
    <property type="match status" value="2"/>
</dbReference>
<dbReference type="InterPro" id="IPR006957">
    <property type="entry name" value="EIN3"/>
</dbReference>
<dbReference type="InterPro" id="IPR047091">
    <property type="entry name" value="EIN3-like_DNA-bd"/>
</dbReference>
<dbReference type="InterPro" id="IPR023278">
    <property type="entry name" value="Ethylene_insens-like_DNA-bd"/>
</dbReference>
<dbReference type="PANTHER" id="PTHR33305">
    <property type="entry name" value="ETHYLENE INSENSITIVE 3-LIKE 2 PROTEIN"/>
    <property type="match status" value="1"/>
</dbReference>
<dbReference type="PANTHER" id="PTHR33305:SF11">
    <property type="entry name" value="PROTEIN ETHYLENE INSENSITIVE 3"/>
    <property type="match status" value="1"/>
</dbReference>
<dbReference type="Pfam" id="PF04873">
    <property type="entry name" value="EIN3_DNA-bd"/>
    <property type="match status" value="1"/>
</dbReference>
<dbReference type="SUPFAM" id="SSF116768">
    <property type="entry name" value="DNA-binding domain of EIN3-like"/>
    <property type="match status" value="1"/>
</dbReference>
<feature type="chain" id="PRO_0000113498" description="Protein ETHYLENE INSENSITIVE 3">
    <location>
        <begin position="1"/>
        <end position="628"/>
    </location>
</feature>
<feature type="region of interest" description="Disordered" evidence="2">
    <location>
        <begin position="66"/>
        <end position="92"/>
    </location>
</feature>
<feature type="region of interest" description="DNA-binding domain" evidence="6">
    <location>
        <begin position="174"/>
        <end position="306"/>
    </location>
</feature>
<feature type="coiled-coil region" evidence="1">
    <location>
        <begin position="38"/>
        <end position="68"/>
    </location>
</feature>
<feature type="compositionally biased region" description="Basic and acidic residues" evidence="2">
    <location>
        <begin position="66"/>
        <end position="79"/>
    </location>
</feature>
<feature type="mutagenesis site" description="In ein3-3; suppression of DNA-binding.">
    <original>K</original>
    <variation>N</variation>
    <location>
        <position position="245"/>
    </location>
</feature>
<feature type="helix" evidence="16">
    <location>
        <begin position="174"/>
        <end position="178"/>
    </location>
</feature>
<feature type="helix" evidence="16">
    <location>
        <begin position="183"/>
        <end position="193"/>
    </location>
</feature>
<feature type="helix" evidence="16">
    <location>
        <begin position="194"/>
        <end position="196"/>
    </location>
</feature>
<feature type="strand" evidence="16">
    <location>
        <begin position="197"/>
        <end position="199"/>
    </location>
</feature>
<feature type="helix" evidence="16">
    <location>
        <begin position="201"/>
        <end position="203"/>
    </location>
</feature>
<feature type="helix" evidence="16">
    <location>
        <begin position="206"/>
        <end position="208"/>
    </location>
</feature>
<feature type="helix" evidence="16">
    <location>
        <begin position="223"/>
        <end position="226"/>
    </location>
</feature>
<feature type="helix" evidence="16">
    <location>
        <begin position="240"/>
        <end position="242"/>
    </location>
</feature>
<feature type="helix" evidence="16">
    <location>
        <begin position="245"/>
        <end position="259"/>
    </location>
</feature>
<feature type="helix" evidence="16">
    <location>
        <begin position="263"/>
        <end position="271"/>
    </location>
</feature>
<feature type="helix" evidence="16">
    <location>
        <begin position="274"/>
        <end position="279"/>
    </location>
</feature>
<feature type="helix" evidence="16">
    <location>
        <begin position="282"/>
        <end position="302"/>
    </location>
</feature>
<comment type="function">
    <text evidence="6 9 10 11">Transcription factor acting as a positive regulator in the ethylene response pathway, by promoting histone acetylation in an ENAP1-dependent manner, thus accelerating the expression of ethylene-responsive genes (PubMed:28874528). Binds DNA (PubMed:26352699). Is required for ethylene responsiveness in adult plant tissues. Binds a primary ethylene response element present in the ETHYLENE-RESPONSE-FACTOR1 promoter with consequence to activate the transcription of this gene.</text>
</comment>
<comment type="activity regulation">
    <text evidence="4 5 8">Activated by phosphorylation by MPK3 and MPK6 (PubMed:18273012). Down-regulated by KIN10 that controls its protein stability under a phosphorylation-dependent manner (PubMed:28600557). Satnilitzed during hypoxia (e.g. submergences) via a ceramides-triggered and CTR1-dependent manner (PubMed:25822663).</text>
</comment>
<comment type="subunit">
    <text evidence="3 7 8 9">Acts as a homodimer to bind the primary ethylene response element. Interacts with TAF12B. Interacts with KIN10 (PubMed:28600557). Binds to ENAP1 in the presence of ethylene; this reaction facilitates its association with histone (PubMed:27694846, PubMed:28874528).</text>
</comment>
<comment type="interaction">
    <interactant intactId="EBI-593576">
        <id>O24606</id>
    </interactant>
    <interactant intactId="EBI-401198">
        <id>Q9SKK0</id>
        <label>EBF1</label>
    </interactant>
    <organismsDiffer>false</organismsDiffer>
    <experiments>4</experiments>
</comment>
<comment type="interaction">
    <interactant intactId="EBI-593576">
        <id>O24606</id>
    </interactant>
    <interactant intactId="EBI-593623">
        <id>Q708Y0</id>
        <label>EBF2</label>
    </interactant>
    <organismsDiffer>false</organismsDiffer>
    <experiments>3</experiments>
</comment>
<comment type="interaction">
    <interactant intactId="EBI-593576">
        <id>O24606</id>
    </interactant>
    <interactant intactId="EBI-639608">
        <id>Q9FML2</id>
        <label>HDA6</label>
    </interactant>
    <organismsDiffer>false</organismsDiffer>
    <experiments>2</experiments>
</comment>
<comment type="interaction">
    <interactant intactId="EBI-593576">
        <id>O24606</id>
    </interactant>
    <interactant intactId="EBI-1388539">
        <id>Q9LMA8</id>
        <label>TIFY10A</label>
    </interactant>
    <organismsDiffer>false</organismsDiffer>
    <experiments>4</experiments>
</comment>
<comment type="subcellular location">
    <subcellularLocation>
        <location>Nucleus</location>
    </subcellularLocation>
</comment>
<comment type="induction">
    <text evidence="5">Accumuates upon hypoxia (e.g. submergences).</text>
</comment>
<comment type="PTM">
    <text evidence="8">Phosphorylated by KIN10.</text>
</comment>
<comment type="miscellaneous">
    <text>Loss-of-function mutations (ein3-1 and ein3-2) in the gene lead to the suppression of ethylene-mediated effects including gene expression, the triple response, cell growth inhibition, and accelerated senescence.</text>
</comment>
<comment type="similarity">
    <text evidence="13">Belongs to the EIN3 family.</text>
</comment>
<evidence type="ECO:0000255" key="1"/>
<evidence type="ECO:0000256" key="2">
    <source>
        <dbReference type="SAM" id="MobiDB-lite"/>
    </source>
</evidence>
<evidence type="ECO:0000269" key="3">
    <source>
    </source>
</evidence>
<evidence type="ECO:0000269" key="4">
    <source>
    </source>
</evidence>
<evidence type="ECO:0000269" key="5">
    <source>
    </source>
</evidence>
<evidence type="ECO:0000269" key="6">
    <source>
    </source>
</evidence>
<evidence type="ECO:0000269" key="7">
    <source>
    </source>
</evidence>
<evidence type="ECO:0000269" key="8">
    <source>
    </source>
</evidence>
<evidence type="ECO:0000269" key="9">
    <source>
    </source>
</evidence>
<evidence type="ECO:0000269" key="10">
    <source>
    </source>
</evidence>
<evidence type="ECO:0000269" key="11">
    <source>
    </source>
</evidence>
<evidence type="ECO:0000303" key="12">
    <source>
    </source>
</evidence>
<evidence type="ECO:0000305" key="13"/>
<evidence type="ECO:0000312" key="14">
    <source>
        <dbReference type="Araport" id="AT3G20770"/>
    </source>
</evidence>
<evidence type="ECO:0000312" key="15">
    <source>
        <dbReference type="EMBL" id="BAB02485.1"/>
    </source>
</evidence>
<evidence type="ECO:0007829" key="16">
    <source>
        <dbReference type="PDB" id="4ZDS"/>
    </source>
</evidence>
<sequence>MMFNEMGMCGNMDFFSSGSLGEVDFCPVPQAEPDSIVEDDYTDDEIDVDELERRMWRDKMRLKRLKEQDKGKEGVDAAKQRQSQEQARRKKMSRAQDGILKYMLKMMEVCKAQGFVYGIIPENGKPVTGASDNLREWWKDKVRFDRNGPAAITKYQAENNIPGIHEGNNPIGPTPHTLQELQDTTLGSLLSALMQHCDPPQRRFPLEKGVPPPWWPNGKEDWWPQLGLPKDQGPAPYKKPHDLKKAWKVGVLTAVIKHMFPDIAKIRKLVRQSKCLQDKMTAKESATWLAIINQEESLARELYPESCPPLSLSGGSCSLLMNDCSQYDVEGFEKESHYEVEELKPEKVMNSSNFGMVAKMHDFPVKEEVPAGNSEFMRKRKPNRDLNTIMDRTVFTCENLGCAHSEISRGFLDRNSRDNHQLACPHRDSRLPYGAAPSRFHVNEVKPVVGFPQPRPVNSVAQPIDLTGIVPEDGQKMISELMSMYDRNVQSNQTSMVMENQSVSLLQPTVHNHQEHLQFPGNMVEGSFFEDLNIPNRANNNNSSNNQTFFQGNNNNNNVFKFDTADHNNFEAAHNNNNNSSGNRFQLVFDSTPFDMASFDYRDDMSMPGVVGTMDGMQQKQQDVSIWF</sequence>
<proteinExistence type="evidence at protein level"/>
<keyword id="KW-0002">3D-structure</keyword>
<keyword id="KW-0010">Activator</keyword>
<keyword id="KW-0156">Chromatin regulator</keyword>
<keyword id="KW-0175">Coiled coil</keyword>
<keyword id="KW-0238">DNA-binding</keyword>
<keyword id="KW-0936">Ethylene signaling pathway</keyword>
<keyword id="KW-0539">Nucleus</keyword>
<keyword id="KW-1185">Reference proteome</keyword>
<keyword id="KW-0804">Transcription</keyword>
<keyword id="KW-0805">Transcription regulation</keyword>